<accession>Q60894</accession>
<accession>Q7TQS5</accession>
<feature type="chain" id="PRO_0000150811" description="Olfactory receptor 9S13">
    <location>
        <begin position="1"/>
        <end position="333"/>
    </location>
</feature>
<feature type="topological domain" description="Extracellular" evidence="1">
    <location>
        <begin position="1"/>
        <end position="35"/>
    </location>
</feature>
<feature type="transmembrane region" description="Helical; Name=1" evidence="1">
    <location>
        <begin position="36"/>
        <end position="56"/>
    </location>
</feature>
<feature type="topological domain" description="Cytoplasmic" evidence="1">
    <location>
        <begin position="57"/>
        <end position="72"/>
    </location>
</feature>
<feature type="transmembrane region" description="Helical; Name=2" evidence="1">
    <location>
        <begin position="73"/>
        <end position="93"/>
    </location>
</feature>
<feature type="topological domain" description="Extracellular" evidence="1">
    <location>
        <begin position="94"/>
        <end position="106"/>
    </location>
</feature>
<feature type="transmembrane region" description="Helical; Name=3" evidence="1">
    <location>
        <begin position="107"/>
        <end position="127"/>
    </location>
</feature>
<feature type="topological domain" description="Cytoplasmic" evidence="1">
    <location>
        <begin position="128"/>
        <end position="150"/>
    </location>
</feature>
<feature type="transmembrane region" description="Helical; Name=4" evidence="1">
    <location>
        <begin position="151"/>
        <end position="171"/>
    </location>
</feature>
<feature type="topological domain" description="Extracellular" evidence="1">
    <location>
        <begin position="172"/>
        <end position="203"/>
    </location>
</feature>
<feature type="transmembrane region" description="Helical; Name=5" evidence="1">
    <location>
        <begin position="204"/>
        <end position="224"/>
    </location>
</feature>
<feature type="topological domain" description="Cytoplasmic" evidence="1">
    <location>
        <begin position="225"/>
        <end position="251"/>
    </location>
</feature>
<feature type="transmembrane region" description="Helical; Name=6" evidence="1">
    <location>
        <begin position="252"/>
        <end position="272"/>
    </location>
</feature>
<feature type="topological domain" description="Extracellular" evidence="1">
    <location>
        <begin position="273"/>
        <end position="278"/>
    </location>
</feature>
<feature type="transmembrane region" description="Helical; Name=7" evidence="1">
    <location>
        <begin position="279"/>
        <end position="299"/>
    </location>
</feature>
<feature type="topological domain" description="Cytoplasmic" evidence="1">
    <location>
        <begin position="300"/>
        <end position="333"/>
    </location>
</feature>
<feature type="glycosylation site" description="N-linked (GlcNAc...) asparagine" evidence="1">
    <location>
        <position position="8"/>
    </location>
</feature>
<feature type="disulfide bond" evidence="2">
    <location>
        <begin position="104"/>
        <end position="196"/>
    </location>
</feature>
<feature type="sequence conflict" description="In Ref. 2; AAC52406." evidence="3" ref="2">
    <original>R</original>
    <variation>G</variation>
    <location>
        <position position="241"/>
    </location>
</feature>
<name>O9S13_MOUSE</name>
<sequence>MATAVHRNGSLTPVSLRVFVLVGFGGGALTQALLFAVFLVLYVVTVLGNLTMIVVITLDARLHSPMYFFLKNLSFVDLCYSSAIAPNALANFLSTSKVISFEACATQFFFFSLLATTETFLLAVMAYDRFMAICSPLRYPVTMCPTTCTRLVLGTFCVGCLNSIVQTSLTFQLPFCSSNRIDHFYCDVPPLLQLACASTALNELFLFGLCGFIIVSTTLAVLVSYGYITVTILRMHSGSGRHKVFSTCGSHLTAVSLFYGTLFVMYAQPGALTSMEQGKVVSIFYTLVIPMLNPLIYSLRNKDVKDALQRLGQRHSLVKAVRGCPAAGGNASV</sequence>
<keyword id="KW-1003">Cell membrane</keyword>
<keyword id="KW-1015">Disulfide bond</keyword>
<keyword id="KW-0297">G-protein coupled receptor</keyword>
<keyword id="KW-0325">Glycoprotein</keyword>
<keyword id="KW-0472">Membrane</keyword>
<keyword id="KW-0552">Olfaction</keyword>
<keyword id="KW-0675">Receptor</keyword>
<keyword id="KW-1185">Reference proteome</keyword>
<keyword id="KW-0716">Sensory transduction</keyword>
<keyword id="KW-0807">Transducer</keyword>
<keyword id="KW-0812">Transmembrane</keyword>
<keyword id="KW-1133">Transmembrane helix</keyword>
<evidence type="ECO:0000255" key="1"/>
<evidence type="ECO:0000255" key="2">
    <source>
        <dbReference type="PROSITE-ProRule" id="PRU00521"/>
    </source>
</evidence>
<evidence type="ECO:0000305" key="3"/>
<evidence type="ECO:0000312" key="4">
    <source>
        <dbReference type="MGI" id="MGI:107863"/>
    </source>
</evidence>
<proteinExistence type="inferred from homology"/>
<protein>
    <recommendedName>
        <fullName evidence="3">Olfactory receptor 9S13</fullName>
    </recommendedName>
    <alternativeName>
        <fullName>Odorant receptor M76</fullName>
    </alternativeName>
    <alternativeName>
        <fullName evidence="4">Olfactory receptor 12</fullName>
    </alternativeName>
</protein>
<dbReference type="EMBL" id="AY318626">
    <property type="protein sequence ID" value="AAP71786.1"/>
    <property type="molecule type" value="Genomic_DNA"/>
</dbReference>
<dbReference type="EMBL" id="U28783">
    <property type="protein sequence ID" value="AAC52406.1"/>
    <property type="molecule type" value="Genomic_DNA"/>
</dbReference>
<dbReference type="CCDS" id="CCDS15174.1"/>
<dbReference type="RefSeq" id="NP_996779.1">
    <property type="nucleotide sequence ID" value="NM_206896.2"/>
</dbReference>
<dbReference type="SMR" id="Q60894"/>
<dbReference type="FunCoup" id="Q60894">
    <property type="interactions" value="1150"/>
</dbReference>
<dbReference type="STRING" id="10090.ENSMUSP00000150858"/>
<dbReference type="GlyCosmos" id="Q60894">
    <property type="glycosylation" value="1 site, No reported glycans"/>
</dbReference>
<dbReference type="GlyGen" id="Q60894">
    <property type="glycosylation" value="1 site, 1 N-linked glycan (1 site)"/>
</dbReference>
<dbReference type="PaxDb" id="10090-ENSMUSP00000080027"/>
<dbReference type="Ensembl" id="ENSMUST00000081274.6">
    <property type="protein sequence ID" value="ENSMUSP00000080027.4"/>
    <property type="gene ID" value="ENSMUSG00000061616.6"/>
</dbReference>
<dbReference type="Ensembl" id="ENSMUST00000213247.2">
    <property type="protein sequence ID" value="ENSMUSP00000150858.2"/>
    <property type="gene ID" value="ENSMUSG00000061616.6"/>
</dbReference>
<dbReference type="GeneID" id="257890"/>
<dbReference type="KEGG" id="mmu:257890"/>
<dbReference type="UCSC" id="uc007cbp.2">
    <property type="organism name" value="mouse"/>
</dbReference>
<dbReference type="AGR" id="MGI:107863"/>
<dbReference type="CTD" id="257890"/>
<dbReference type="MGI" id="MGI:107863">
    <property type="gene designation" value="Or9s13"/>
</dbReference>
<dbReference type="VEuPathDB" id="HostDB:ENSMUSG00000061616"/>
<dbReference type="eggNOG" id="ENOG502SKXC">
    <property type="taxonomic scope" value="Eukaryota"/>
</dbReference>
<dbReference type="GeneTree" id="ENSGT01120000271831"/>
<dbReference type="HOGENOM" id="CLU_012526_1_0_1"/>
<dbReference type="InParanoid" id="Q60894"/>
<dbReference type="OMA" id="IQIACAD"/>
<dbReference type="OrthoDB" id="9823959at2759"/>
<dbReference type="PhylomeDB" id="Q60894"/>
<dbReference type="TreeFam" id="TF352758"/>
<dbReference type="BioGRID-ORCS" id="257890">
    <property type="hits" value="2 hits in 68 CRISPR screens"/>
</dbReference>
<dbReference type="PRO" id="PR:Q60894"/>
<dbReference type="Proteomes" id="UP000000589">
    <property type="component" value="Chromosome 1"/>
</dbReference>
<dbReference type="RNAct" id="Q60894">
    <property type="molecule type" value="protein"/>
</dbReference>
<dbReference type="ExpressionAtlas" id="Q60894">
    <property type="expression patterns" value="baseline and differential"/>
</dbReference>
<dbReference type="GO" id="GO:0016020">
    <property type="term" value="C:membrane"/>
    <property type="evidence" value="ECO:0000247"/>
    <property type="project" value="MGI"/>
</dbReference>
<dbReference type="GO" id="GO:0005886">
    <property type="term" value="C:plasma membrane"/>
    <property type="evidence" value="ECO:0007669"/>
    <property type="project" value="UniProtKB-SubCell"/>
</dbReference>
<dbReference type="GO" id="GO:0004930">
    <property type="term" value="F:G protein-coupled receptor activity"/>
    <property type="evidence" value="ECO:0007669"/>
    <property type="project" value="UniProtKB-KW"/>
</dbReference>
<dbReference type="GO" id="GO:0004984">
    <property type="term" value="F:olfactory receptor activity"/>
    <property type="evidence" value="ECO:0000247"/>
    <property type="project" value="MGI"/>
</dbReference>
<dbReference type="GO" id="GO:0007186">
    <property type="term" value="P:G protein-coupled receptor signaling pathway"/>
    <property type="evidence" value="ECO:0000247"/>
    <property type="project" value="MGI"/>
</dbReference>
<dbReference type="GO" id="GO:0007608">
    <property type="term" value="P:sensory perception of smell"/>
    <property type="evidence" value="ECO:0000247"/>
    <property type="project" value="MGI"/>
</dbReference>
<dbReference type="CDD" id="cd15419">
    <property type="entry name" value="7tmA_OR9K2-like"/>
    <property type="match status" value="1"/>
</dbReference>
<dbReference type="FunFam" id="1.20.1070.10:FF:000003">
    <property type="entry name" value="Olfactory receptor"/>
    <property type="match status" value="1"/>
</dbReference>
<dbReference type="Gene3D" id="1.20.1070.10">
    <property type="entry name" value="Rhodopsin 7-helix transmembrane proteins"/>
    <property type="match status" value="1"/>
</dbReference>
<dbReference type="InterPro" id="IPR000276">
    <property type="entry name" value="GPCR_Rhodpsn"/>
</dbReference>
<dbReference type="InterPro" id="IPR017452">
    <property type="entry name" value="GPCR_Rhodpsn_7TM"/>
</dbReference>
<dbReference type="InterPro" id="IPR000725">
    <property type="entry name" value="Olfact_rcpt"/>
</dbReference>
<dbReference type="PANTHER" id="PTHR48018">
    <property type="entry name" value="OLFACTORY RECEPTOR"/>
    <property type="match status" value="1"/>
</dbReference>
<dbReference type="Pfam" id="PF13853">
    <property type="entry name" value="7tm_4"/>
    <property type="match status" value="1"/>
</dbReference>
<dbReference type="PRINTS" id="PR00237">
    <property type="entry name" value="GPCRRHODOPSN"/>
</dbReference>
<dbReference type="PRINTS" id="PR00245">
    <property type="entry name" value="OLFACTORYR"/>
</dbReference>
<dbReference type="SUPFAM" id="SSF81321">
    <property type="entry name" value="Family A G protein-coupled receptor-like"/>
    <property type="match status" value="1"/>
</dbReference>
<dbReference type="PROSITE" id="PS00237">
    <property type="entry name" value="G_PROTEIN_RECEP_F1_1"/>
    <property type="match status" value="1"/>
</dbReference>
<dbReference type="PROSITE" id="PS50262">
    <property type="entry name" value="G_PROTEIN_RECEP_F1_2"/>
    <property type="match status" value="1"/>
</dbReference>
<gene>
    <name evidence="4" type="primary">Or9s13</name>
    <name evidence="4" type="synonym">Olfr12</name>
</gene>
<reference key="1">
    <citation type="journal article" date="2003" name="Genome Biol.">
        <title>Odorant receptor expressed sequence tags demonstrate olfactory expression of over 400 genes, extensive alternate splicing and unequal expression levels.</title>
        <authorList>
            <person name="Young J.M."/>
            <person name="Shykind B.M."/>
            <person name="Lane R.P."/>
            <person name="Tonnes-Priddy L."/>
            <person name="Ross J.A."/>
            <person name="Walker M."/>
            <person name="Williams E.M."/>
            <person name="Trask B.J."/>
        </authorList>
    </citation>
    <scope>NUCLEOTIDE SEQUENCE [GENOMIC DNA]</scope>
</reference>
<reference key="2">
    <citation type="journal article" date="1996" name="Proc. Natl. Acad. Sci. U.S.A.">
        <title>The chromosomal distribution of mouse odorant receptor genes.</title>
        <authorList>
            <person name="Sullivan S.L."/>
            <person name="Adamson M.C."/>
            <person name="Ressler K.J."/>
            <person name="Kozak C.A."/>
            <person name="Buck L.B."/>
        </authorList>
    </citation>
    <scope>NUCLEOTIDE SEQUENCE [GENOMIC DNA] OF 135-246</scope>
    <source>
        <strain>C57BL/6J</strain>
    </source>
</reference>
<comment type="function">
    <text evidence="3">Odorant receptor.</text>
</comment>
<comment type="subcellular location">
    <subcellularLocation>
        <location evidence="3">Cell membrane</location>
        <topology evidence="1">Multi-pass membrane protein</topology>
    </subcellularLocation>
</comment>
<comment type="similarity">
    <text evidence="2">Belongs to the G-protein coupled receptor 1 family.</text>
</comment>
<organism>
    <name type="scientific">Mus musculus</name>
    <name type="common">Mouse</name>
    <dbReference type="NCBI Taxonomy" id="10090"/>
    <lineage>
        <taxon>Eukaryota</taxon>
        <taxon>Metazoa</taxon>
        <taxon>Chordata</taxon>
        <taxon>Craniata</taxon>
        <taxon>Vertebrata</taxon>
        <taxon>Euteleostomi</taxon>
        <taxon>Mammalia</taxon>
        <taxon>Eutheria</taxon>
        <taxon>Euarchontoglires</taxon>
        <taxon>Glires</taxon>
        <taxon>Rodentia</taxon>
        <taxon>Myomorpha</taxon>
        <taxon>Muroidea</taxon>
        <taxon>Muridae</taxon>
        <taxon>Murinae</taxon>
        <taxon>Mus</taxon>
        <taxon>Mus</taxon>
    </lineage>
</organism>